<sequence>TKIFALLALHALLVSGTTAAIIPQCSLAPNAIIPQFIPPVTALGNEHLAVQAIRLQQVLSASILQQPIAQLQQHFLAHLTVQTITRRRQQQQQQQQQQQQFLSSLSALAVRNQAAYLQQQLLTSNPHSLANAAAYQQQQQLQLAMANPTAYVQQQLLLSNPQAATNAATYLQQQQFQQILPALSQLAMANPTAYLQQQQLLPINQLALANTDAYLQQQQLLPVNPLVVANPLVAAFLQQQQLSSFNQISLVNPALSWQQPIIGGAIF</sequence>
<reference key="1">
    <citation type="journal article" date="1989" name="Plant Mol. Biol.">
        <title>Characterisation of the kafirin gene family from sorghum reveals extensive homology with zein from maize.</title>
        <authorList>
            <person name="Derose R.T."/>
            <person name="Ma D.P."/>
            <person name="Kwon I.S."/>
            <person name="Hasnain S.E."/>
            <person name="Klassy R.C."/>
            <person name="Hall T.C."/>
        </authorList>
    </citation>
    <scope>NUCLEOTIDE SEQUENCE [MRNA]</scope>
    <source>
        <strain>cv. RTx430</strain>
    </source>
</reference>
<comment type="function">
    <text>Major seed storage prolamin.</text>
</comment>
<comment type="similarity">
    <text evidence="1">Belongs to the zein family.</text>
</comment>
<keyword id="KW-0708">Seed storage protein</keyword>
<keyword id="KW-0732">Signal</keyword>
<keyword id="KW-0758">Storage protein</keyword>
<feature type="signal peptide">
    <location>
        <begin position="1" status="less than"/>
        <end position="19"/>
    </location>
</feature>
<feature type="chain" id="PRO_0000041631" description="Kafirin PSK8">
    <location>
        <begin position="20"/>
        <end position="267"/>
    </location>
</feature>
<feature type="non-terminal residue">
    <location>
        <position position="1"/>
    </location>
</feature>
<name>KAF8_SORBI</name>
<proteinExistence type="evidence at transcript level"/>
<accession>P14692</accession>
<organism>
    <name type="scientific">Sorghum bicolor</name>
    <name type="common">Sorghum</name>
    <name type="synonym">Sorghum vulgare</name>
    <dbReference type="NCBI Taxonomy" id="4558"/>
    <lineage>
        <taxon>Eukaryota</taxon>
        <taxon>Viridiplantae</taxon>
        <taxon>Streptophyta</taxon>
        <taxon>Embryophyta</taxon>
        <taxon>Tracheophyta</taxon>
        <taxon>Spermatophyta</taxon>
        <taxon>Magnoliopsida</taxon>
        <taxon>Liliopsida</taxon>
        <taxon>Poales</taxon>
        <taxon>Poaceae</taxon>
        <taxon>PACMAD clade</taxon>
        <taxon>Panicoideae</taxon>
        <taxon>Andropogonodae</taxon>
        <taxon>Andropogoneae</taxon>
        <taxon>Sorghinae</taxon>
        <taxon>Sorghum</taxon>
    </lineage>
</organism>
<dbReference type="EMBL" id="X16102">
    <property type="protein sequence ID" value="CAA34229.1"/>
    <property type="molecule type" value="mRNA"/>
</dbReference>
<dbReference type="PIR" id="S09672">
    <property type="entry name" value="S09672"/>
</dbReference>
<dbReference type="ExpressionAtlas" id="P14692">
    <property type="expression patterns" value="baseline"/>
</dbReference>
<dbReference type="GO" id="GO:0045735">
    <property type="term" value="F:nutrient reservoir activity"/>
    <property type="evidence" value="ECO:0007669"/>
    <property type="project" value="UniProtKB-KW"/>
</dbReference>
<dbReference type="InterPro" id="IPR051529">
    <property type="entry name" value="Seed_Storage_Prolamin"/>
</dbReference>
<dbReference type="InterPro" id="IPR002530">
    <property type="entry name" value="Zein"/>
</dbReference>
<dbReference type="PANTHER" id="PTHR48199">
    <property type="entry name" value="ALPHA KAFIRIN"/>
    <property type="match status" value="1"/>
</dbReference>
<dbReference type="PANTHER" id="PTHR48199:SF1">
    <property type="entry name" value="ALPHA KAFIRIN"/>
    <property type="match status" value="1"/>
</dbReference>
<dbReference type="Pfam" id="PF01559">
    <property type="entry name" value="Zein"/>
    <property type="match status" value="1"/>
</dbReference>
<evidence type="ECO:0000305" key="1"/>
<protein>
    <recommendedName>
        <fullName>Kafirin PSK8</fullName>
    </recommendedName>
</protein>